<proteinExistence type="inferred from homology"/>
<accession>B8EJY5</accession>
<gene>
    <name evidence="1" type="primary">purM</name>
    <name type="ordered locus">Msil_0963</name>
</gene>
<organism>
    <name type="scientific">Methylocella silvestris (strain DSM 15510 / CIP 108128 / LMG 27833 / NCIMB 13906 / BL2)</name>
    <dbReference type="NCBI Taxonomy" id="395965"/>
    <lineage>
        <taxon>Bacteria</taxon>
        <taxon>Pseudomonadati</taxon>
        <taxon>Pseudomonadota</taxon>
        <taxon>Alphaproteobacteria</taxon>
        <taxon>Hyphomicrobiales</taxon>
        <taxon>Beijerinckiaceae</taxon>
        <taxon>Methylocella</taxon>
    </lineage>
</organism>
<feature type="chain" id="PRO_1000148287" description="Phosphoribosylformylglycinamidine cyclo-ligase">
    <location>
        <begin position="1"/>
        <end position="353"/>
    </location>
</feature>
<comment type="catalytic activity">
    <reaction evidence="1">
        <text>2-formamido-N(1)-(5-O-phospho-beta-D-ribosyl)acetamidine + ATP = 5-amino-1-(5-phospho-beta-D-ribosyl)imidazole + ADP + phosphate + H(+)</text>
        <dbReference type="Rhea" id="RHEA:23032"/>
        <dbReference type="ChEBI" id="CHEBI:15378"/>
        <dbReference type="ChEBI" id="CHEBI:30616"/>
        <dbReference type="ChEBI" id="CHEBI:43474"/>
        <dbReference type="ChEBI" id="CHEBI:137981"/>
        <dbReference type="ChEBI" id="CHEBI:147287"/>
        <dbReference type="ChEBI" id="CHEBI:456216"/>
        <dbReference type="EC" id="6.3.3.1"/>
    </reaction>
</comment>
<comment type="pathway">
    <text evidence="1">Purine metabolism; IMP biosynthesis via de novo pathway; 5-amino-1-(5-phospho-D-ribosyl)imidazole from N(2)-formyl-N(1)-(5-phospho-D-ribosyl)glycinamide: step 2/2.</text>
</comment>
<comment type="subcellular location">
    <subcellularLocation>
        <location evidence="1">Cytoplasm</location>
    </subcellularLocation>
</comment>
<comment type="similarity">
    <text evidence="1">Belongs to the AIR synthase family.</text>
</comment>
<dbReference type="EC" id="6.3.3.1" evidence="1"/>
<dbReference type="EMBL" id="CP001280">
    <property type="protein sequence ID" value="ACK49932.1"/>
    <property type="molecule type" value="Genomic_DNA"/>
</dbReference>
<dbReference type="RefSeq" id="WP_012590002.1">
    <property type="nucleotide sequence ID" value="NC_011666.1"/>
</dbReference>
<dbReference type="SMR" id="B8EJY5"/>
<dbReference type="STRING" id="395965.Msil_0963"/>
<dbReference type="KEGG" id="msl:Msil_0963"/>
<dbReference type="eggNOG" id="COG0150">
    <property type="taxonomic scope" value="Bacteria"/>
</dbReference>
<dbReference type="HOGENOM" id="CLU_047116_0_0_5"/>
<dbReference type="OrthoDB" id="9777881at2"/>
<dbReference type="UniPathway" id="UPA00074">
    <property type="reaction ID" value="UER00129"/>
</dbReference>
<dbReference type="Proteomes" id="UP000002257">
    <property type="component" value="Chromosome"/>
</dbReference>
<dbReference type="GO" id="GO:0005829">
    <property type="term" value="C:cytosol"/>
    <property type="evidence" value="ECO:0007669"/>
    <property type="project" value="TreeGrafter"/>
</dbReference>
<dbReference type="GO" id="GO:0005524">
    <property type="term" value="F:ATP binding"/>
    <property type="evidence" value="ECO:0007669"/>
    <property type="project" value="UniProtKB-KW"/>
</dbReference>
<dbReference type="GO" id="GO:0004637">
    <property type="term" value="F:phosphoribosylamine-glycine ligase activity"/>
    <property type="evidence" value="ECO:0007669"/>
    <property type="project" value="TreeGrafter"/>
</dbReference>
<dbReference type="GO" id="GO:0004641">
    <property type="term" value="F:phosphoribosylformylglycinamidine cyclo-ligase activity"/>
    <property type="evidence" value="ECO:0007669"/>
    <property type="project" value="UniProtKB-UniRule"/>
</dbReference>
<dbReference type="GO" id="GO:0006189">
    <property type="term" value="P:'de novo' IMP biosynthetic process"/>
    <property type="evidence" value="ECO:0007669"/>
    <property type="project" value="UniProtKB-UniRule"/>
</dbReference>
<dbReference type="GO" id="GO:0046084">
    <property type="term" value="P:adenine biosynthetic process"/>
    <property type="evidence" value="ECO:0007669"/>
    <property type="project" value="TreeGrafter"/>
</dbReference>
<dbReference type="CDD" id="cd02196">
    <property type="entry name" value="PurM"/>
    <property type="match status" value="1"/>
</dbReference>
<dbReference type="FunFam" id="3.30.1330.10:FF:000001">
    <property type="entry name" value="Phosphoribosylformylglycinamidine cyclo-ligase"/>
    <property type="match status" value="1"/>
</dbReference>
<dbReference type="FunFam" id="3.90.650.10:FF:000011">
    <property type="entry name" value="Phosphoribosylformylglycinamidine cyclo-ligase"/>
    <property type="match status" value="1"/>
</dbReference>
<dbReference type="Gene3D" id="3.90.650.10">
    <property type="entry name" value="PurM-like C-terminal domain"/>
    <property type="match status" value="1"/>
</dbReference>
<dbReference type="Gene3D" id="3.30.1330.10">
    <property type="entry name" value="PurM-like, N-terminal domain"/>
    <property type="match status" value="1"/>
</dbReference>
<dbReference type="HAMAP" id="MF_00741">
    <property type="entry name" value="AIRS"/>
    <property type="match status" value="1"/>
</dbReference>
<dbReference type="InterPro" id="IPR010918">
    <property type="entry name" value="PurM-like_C_dom"/>
</dbReference>
<dbReference type="InterPro" id="IPR036676">
    <property type="entry name" value="PurM-like_C_sf"/>
</dbReference>
<dbReference type="InterPro" id="IPR016188">
    <property type="entry name" value="PurM-like_N"/>
</dbReference>
<dbReference type="InterPro" id="IPR036921">
    <property type="entry name" value="PurM-like_N_sf"/>
</dbReference>
<dbReference type="InterPro" id="IPR004733">
    <property type="entry name" value="PurM_cligase"/>
</dbReference>
<dbReference type="NCBIfam" id="TIGR00878">
    <property type="entry name" value="purM"/>
    <property type="match status" value="1"/>
</dbReference>
<dbReference type="PANTHER" id="PTHR10520:SF12">
    <property type="entry name" value="TRIFUNCTIONAL PURINE BIOSYNTHETIC PROTEIN ADENOSINE-3"/>
    <property type="match status" value="1"/>
</dbReference>
<dbReference type="PANTHER" id="PTHR10520">
    <property type="entry name" value="TRIFUNCTIONAL PURINE BIOSYNTHETIC PROTEIN ADENOSINE-3-RELATED"/>
    <property type="match status" value="1"/>
</dbReference>
<dbReference type="Pfam" id="PF00586">
    <property type="entry name" value="AIRS"/>
    <property type="match status" value="1"/>
</dbReference>
<dbReference type="Pfam" id="PF02769">
    <property type="entry name" value="AIRS_C"/>
    <property type="match status" value="1"/>
</dbReference>
<dbReference type="SUPFAM" id="SSF56042">
    <property type="entry name" value="PurM C-terminal domain-like"/>
    <property type="match status" value="1"/>
</dbReference>
<dbReference type="SUPFAM" id="SSF55326">
    <property type="entry name" value="PurM N-terminal domain-like"/>
    <property type="match status" value="1"/>
</dbReference>
<evidence type="ECO:0000255" key="1">
    <source>
        <dbReference type="HAMAP-Rule" id="MF_00741"/>
    </source>
</evidence>
<keyword id="KW-0067">ATP-binding</keyword>
<keyword id="KW-0963">Cytoplasm</keyword>
<keyword id="KW-0436">Ligase</keyword>
<keyword id="KW-0547">Nucleotide-binding</keyword>
<keyword id="KW-0658">Purine biosynthesis</keyword>
<keyword id="KW-1185">Reference proteome</keyword>
<sequence length="353" mass="35713">MTDETKLTYADAGVDIDAGNAMVEAIKPLVRATRRRGADAEIGGFGGLFDLKAAGFTDPILVAANDGVGTKVRIAIETGAHDTIGIDLVAMCVNDLIVQGAEPLFFLDYYASGKLDGAAAAAVVKGIANGCIEAGAALIGGETAEMPGLYAGADYDLAGFAVGAVERGALLPRSDIAAGDVLLGLASSGAHSNGFSLIRKIVAAQKLGWDAPAPYAPGQSLGAALLTPTRIYVKTLLPLLRAQAGIKGLAHITGGGFPDNLPRVLPQGLGVEVDLSAIAVPPVFAWLAEAGHVSAAEMLRTFNCGVGMALICAEADAGALLASLRAAGEQPVALGRVTPAGAERVTYSGRLSL</sequence>
<name>PUR5_METSB</name>
<protein>
    <recommendedName>
        <fullName evidence="1">Phosphoribosylformylglycinamidine cyclo-ligase</fullName>
        <ecNumber evidence="1">6.3.3.1</ecNumber>
    </recommendedName>
    <alternativeName>
        <fullName evidence="1">AIR synthase</fullName>
    </alternativeName>
    <alternativeName>
        <fullName evidence="1">AIRS</fullName>
    </alternativeName>
    <alternativeName>
        <fullName evidence="1">Phosphoribosyl-aminoimidazole synthetase</fullName>
    </alternativeName>
</protein>
<reference key="1">
    <citation type="journal article" date="2010" name="J. Bacteriol.">
        <title>Complete genome sequence of the aerobic facultative methanotroph Methylocella silvestris BL2.</title>
        <authorList>
            <person name="Chen Y."/>
            <person name="Crombie A."/>
            <person name="Rahman M.T."/>
            <person name="Dedysh S.N."/>
            <person name="Liesack W."/>
            <person name="Stott M.B."/>
            <person name="Alam M."/>
            <person name="Theisen A.R."/>
            <person name="Murrell J.C."/>
            <person name="Dunfield P.F."/>
        </authorList>
    </citation>
    <scope>NUCLEOTIDE SEQUENCE [LARGE SCALE GENOMIC DNA]</scope>
    <source>
        <strain>DSM 15510 / CIP 108128 / LMG 27833 / NCIMB 13906 / BL2</strain>
    </source>
</reference>